<proteinExistence type="evidence at protein level"/>
<protein>
    <recommendedName>
        <fullName>Myelin P2 protein</fullName>
    </recommendedName>
</protein>
<gene>
    <name type="primary">PMP2</name>
</gene>
<reference key="1">
    <citation type="journal article" date="2005" name="Acta Crystallogr. D">
        <title>Structure of myelin P2 protein from equine spinal cord.</title>
        <authorList>
            <person name="Hunter D.J."/>
            <person name="Macmaster R."/>
            <person name="Roszak A.W."/>
            <person name="Riboldi-Tunnicliffe A."/>
            <person name="Griffiths I.R."/>
            <person name="Freer A.A."/>
        </authorList>
    </citation>
    <scope>X-RAY CRYSTALLOGRAPHY (2.1 ANGSTROMS)</scope>
    <scope>SUBCELLULAR LOCATION</scope>
    <scope>TISSUE SPECIFICITY</scope>
    <scope>FUNCTION</scope>
    <scope>MASS SPECTROMETRY</scope>
</reference>
<accession>P0C6G6</accession>
<dbReference type="PDB" id="1YIV">
    <property type="method" value="X-ray"/>
    <property type="resolution" value="2.10 A"/>
    <property type="chains" value="A=2-130"/>
</dbReference>
<dbReference type="PDBsum" id="1YIV"/>
<dbReference type="SMR" id="P0C6G6"/>
<dbReference type="STRING" id="9796.ENSECAP00000004887"/>
<dbReference type="InParanoid" id="P0C6G6"/>
<dbReference type="EvolutionaryTrace" id="P0C6G6"/>
<dbReference type="Proteomes" id="UP000002281">
    <property type="component" value="Unplaced"/>
</dbReference>
<dbReference type="GO" id="GO:0005829">
    <property type="term" value="C:cytosol"/>
    <property type="evidence" value="ECO:0000318"/>
    <property type="project" value="GO_Central"/>
</dbReference>
<dbReference type="GO" id="GO:0005634">
    <property type="term" value="C:nucleus"/>
    <property type="evidence" value="ECO:0000318"/>
    <property type="project" value="GO_Central"/>
</dbReference>
<dbReference type="GO" id="GO:0005504">
    <property type="term" value="F:fatty acid binding"/>
    <property type="evidence" value="ECO:0000318"/>
    <property type="project" value="GO_Central"/>
</dbReference>
<dbReference type="GO" id="GO:0015908">
    <property type="term" value="P:fatty acid transport"/>
    <property type="evidence" value="ECO:0000318"/>
    <property type="project" value="GO_Central"/>
</dbReference>
<dbReference type="FunFam" id="2.40.128.20:FF:000001">
    <property type="entry name" value="Fatty acid-binding protein, adipocyte"/>
    <property type="match status" value="1"/>
</dbReference>
<dbReference type="Gene3D" id="2.40.128.20">
    <property type="match status" value="1"/>
</dbReference>
<dbReference type="InterPro" id="IPR012674">
    <property type="entry name" value="Calycin"/>
</dbReference>
<dbReference type="InterPro" id="IPR000463">
    <property type="entry name" value="Fatty_acid-bd"/>
</dbReference>
<dbReference type="InterPro" id="IPR031259">
    <property type="entry name" value="ILBP"/>
</dbReference>
<dbReference type="InterPro" id="IPR000566">
    <property type="entry name" value="Lipocln_cytosolic_FA-bd_dom"/>
</dbReference>
<dbReference type="PANTHER" id="PTHR11955">
    <property type="entry name" value="FATTY ACID BINDING PROTEIN"/>
    <property type="match status" value="1"/>
</dbReference>
<dbReference type="Pfam" id="PF00061">
    <property type="entry name" value="Lipocalin"/>
    <property type="match status" value="1"/>
</dbReference>
<dbReference type="PRINTS" id="PR00178">
    <property type="entry name" value="FATTYACIDBP"/>
</dbReference>
<dbReference type="SUPFAM" id="SSF50814">
    <property type="entry name" value="Lipocalins"/>
    <property type="match status" value="1"/>
</dbReference>
<dbReference type="PROSITE" id="PS00214">
    <property type="entry name" value="FABP"/>
    <property type="match status" value="1"/>
</dbReference>
<sequence>MSNKFLGTWKLTSSENFDEYMKALGVGLGTRSLGNLAGPTVIISKSGDVITIRTESGFKNTEISFKLGQEFEETTADNRKTKSTVTLAGGKLNQVQKWNGNETTIKRELVDGKMVVECSMASVVCTRIYEQV</sequence>
<evidence type="ECO:0000250" key="1">
    <source>
        <dbReference type="UniProtKB" id="P02689"/>
    </source>
</evidence>
<evidence type="ECO:0000250" key="2">
    <source>
        <dbReference type="UniProtKB" id="P02690"/>
    </source>
</evidence>
<evidence type="ECO:0000269" key="3">
    <source>
    </source>
</evidence>
<evidence type="ECO:0000305" key="4"/>
<evidence type="ECO:0007829" key="5">
    <source>
        <dbReference type="PDB" id="1YIV"/>
    </source>
</evidence>
<keyword id="KW-0002">3D-structure</keyword>
<keyword id="KW-0007">Acetylation</keyword>
<keyword id="KW-0963">Cytoplasm</keyword>
<keyword id="KW-1015">Disulfide bond</keyword>
<keyword id="KW-0446">Lipid-binding</keyword>
<keyword id="KW-1185">Reference proteome</keyword>
<keyword id="KW-0813">Transport</keyword>
<organism>
    <name type="scientific">Equus caballus</name>
    <name type="common">Horse</name>
    <dbReference type="NCBI Taxonomy" id="9796"/>
    <lineage>
        <taxon>Eukaryota</taxon>
        <taxon>Metazoa</taxon>
        <taxon>Chordata</taxon>
        <taxon>Craniata</taxon>
        <taxon>Vertebrata</taxon>
        <taxon>Euteleostomi</taxon>
        <taxon>Mammalia</taxon>
        <taxon>Eutheria</taxon>
        <taxon>Laurasiatheria</taxon>
        <taxon>Perissodactyla</taxon>
        <taxon>Equidae</taxon>
        <taxon>Equus</taxon>
    </lineage>
</organism>
<name>MYP2_HORSE</name>
<comment type="function">
    <text evidence="3">May play a role in lipid transport protein in Schwann cells. May bind cholesterol.</text>
</comment>
<comment type="subunit">
    <text>Monomer.</text>
</comment>
<comment type="subcellular location">
    <subcellularLocation>
        <location evidence="3">Cytoplasm</location>
    </subcellularLocation>
</comment>
<comment type="tissue specificity">
    <text evidence="3">Detected in spinal cord (at protein level).</text>
</comment>
<comment type="domain">
    <text>Forms a beta-barrel structure that accommodates hydrophobic ligands in its interior.</text>
</comment>
<comment type="mass spectrometry"/>
<comment type="miscellaneous">
    <text>P2 protein and myelin basic protein together constitute a major fraction of peripheral nervous system myelin protein.</text>
</comment>
<comment type="similarity">
    <text evidence="4">Belongs to the calycin superfamily. Fatty-acid binding protein (FABP) family.</text>
</comment>
<feature type="initiator methionine" description="Removed" evidence="2">
    <location>
        <position position="1"/>
    </location>
</feature>
<feature type="chain" id="PRO_0000323733" description="Myelin P2 protein">
    <location>
        <begin position="2"/>
        <end position="132"/>
    </location>
</feature>
<feature type="binding site" evidence="2">
    <location>
        <position position="107"/>
    </location>
    <ligand>
        <name>(9Z)-octadecenoate</name>
        <dbReference type="ChEBI" id="CHEBI:30823"/>
    </ligand>
</feature>
<feature type="binding site" evidence="1">
    <location>
        <position position="107"/>
    </location>
    <ligand>
        <name>hexadecanoate</name>
        <dbReference type="ChEBI" id="CHEBI:7896"/>
    </ligand>
</feature>
<feature type="binding site" evidence="2">
    <location>
        <begin position="127"/>
        <end position="129"/>
    </location>
    <ligand>
        <name>(9Z)-octadecenoate</name>
        <dbReference type="ChEBI" id="CHEBI:30823"/>
    </ligand>
</feature>
<feature type="binding site" evidence="1">
    <location>
        <begin position="127"/>
        <end position="129"/>
    </location>
    <ligand>
        <name>hexadecanoate</name>
        <dbReference type="ChEBI" id="CHEBI:7896"/>
    </ligand>
</feature>
<feature type="modified residue" description="N-acetylserine" evidence="2">
    <location>
        <position position="2"/>
    </location>
</feature>
<feature type="disulfide bond">
    <location>
        <begin position="118"/>
        <end position="125"/>
    </location>
</feature>
<feature type="helix" evidence="5">
    <location>
        <begin position="3"/>
        <end position="5"/>
    </location>
</feature>
<feature type="strand" evidence="5">
    <location>
        <begin position="7"/>
        <end position="16"/>
    </location>
</feature>
<feature type="helix" evidence="5">
    <location>
        <begin position="17"/>
        <end position="23"/>
    </location>
</feature>
<feature type="helix" evidence="5">
    <location>
        <begin position="28"/>
        <end position="36"/>
    </location>
</feature>
<feature type="strand" evidence="5">
    <location>
        <begin position="40"/>
        <end position="46"/>
    </location>
</feature>
<feature type="strand" evidence="5">
    <location>
        <begin position="49"/>
        <end position="55"/>
    </location>
</feature>
<feature type="strand" evidence="5">
    <location>
        <begin position="61"/>
        <end position="65"/>
    </location>
</feature>
<feature type="strand" evidence="5">
    <location>
        <begin position="71"/>
        <end position="74"/>
    </location>
</feature>
<feature type="strand" evidence="5">
    <location>
        <begin position="80"/>
        <end position="87"/>
    </location>
</feature>
<feature type="strand" evidence="5">
    <location>
        <begin position="89"/>
        <end position="98"/>
    </location>
</feature>
<feature type="strand" evidence="5">
    <location>
        <begin position="101"/>
        <end position="110"/>
    </location>
</feature>
<feature type="strand" evidence="5">
    <location>
        <begin position="113"/>
        <end position="120"/>
    </location>
</feature>
<feature type="strand" evidence="5">
    <location>
        <begin position="123"/>
        <end position="132"/>
    </location>
</feature>